<accession>Q0SMF2</accession>
<protein>
    <recommendedName>
        <fullName evidence="1">Large ribosomal subunit protein bL32</fullName>
    </recommendedName>
    <alternativeName>
        <fullName evidence="2">50S ribosomal protein L32</fullName>
    </alternativeName>
</protein>
<reference key="1">
    <citation type="journal article" date="2006" name="BMC Genomics">
        <title>Comparative genome analysis: selection pressure on the Borrelia vls cassettes is essential for infectivity.</title>
        <authorList>
            <person name="Gloeckner G."/>
            <person name="Schulte-Spechtel U."/>
            <person name="Schilhabel M."/>
            <person name="Felder M."/>
            <person name="Suehnel J."/>
            <person name="Wilske B."/>
            <person name="Platzer M."/>
        </authorList>
    </citation>
    <scope>NUCLEOTIDE SEQUENCE [LARGE SCALE GENOMIC DNA]</scope>
    <source>
        <strain>PKo</strain>
    </source>
</reference>
<reference key="2">
    <citation type="journal article" date="2011" name="J. Bacteriol.">
        <title>Whole-genome sequences of two Borrelia afzelii and two Borrelia garinii Lyme disease agent isolates.</title>
        <authorList>
            <person name="Casjens S.R."/>
            <person name="Mongodin E.F."/>
            <person name="Qiu W.G."/>
            <person name="Dunn J.J."/>
            <person name="Luft B.J."/>
            <person name="Fraser-Liggett C.M."/>
            <person name="Schutzer S.E."/>
        </authorList>
    </citation>
    <scope>NUCLEOTIDE SEQUENCE [LARGE SCALE GENOMIC DNA]</scope>
    <source>
        <strain>PKo</strain>
    </source>
</reference>
<name>RL32_BORAP</name>
<gene>
    <name evidence="1" type="primary">rpmF</name>
    <name type="ordered locus">BAPKO_0746</name>
    <name type="ordered locus">BafPKo_0726.1</name>
</gene>
<feature type="chain" id="PRO_0000296430" description="Large ribosomal subunit protein bL32">
    <location>
        <begin position="1"/>
        <end position="60"/>
    </location>
</feature>
<evidence type="ECO:0000255" key="1">
    <source>
        <dbReference type="HAMAP-Rule" id="MF_00340"/>
    </source>
</evidence>
<evidence type="ECO:0000305" key="2"/>
<comment type="similarity">
    <text evidence="1">Belongs to the bacterial ribosomal protein bL32 family.</text>
</comment>
<proteinExistence type="inferred from homology"/>
<dbReference type="EMBL" id="CP000395">
    <property type="protein sequence ID" value="ABH01976.1"/>
    <property type="molecule type" value="Genomic_DNA"/>
</dbReference>
<dbReference type="EMBL" id="CP002933">
    <property type="status" value="NOT_ANNOTATED_CDS"/>
    <property type="molecule type" value="Genomic_DNA"/>
</dbReference>
<dbReference type="RefSeq" id="WP_011601176.1">
    <property type="nucleotide sequence ID" value="NZ_CP160066.1"/>
</dbReference>
<dbReference type="SMR" id="Q0SMF2"/>
<dbReference type="STRING" id="29518.BLA32_00725"/>
<dbReference type="GeneID" id="77265555"/>
<dbReference type="KEGG" id="baf:BAPKO_0746"/>
<dbReference type="OrthoDB" id="9812874at2"/>
<dbReference type="Proteomes" id="UP000005216">
    <property type="component" value="Chromosome"/>
</dbReference>
<dbReference type="GO" id="GO:0015934">
    <property type="term" value="C:large ribosomal subunit"/>
    <property type="evidence" value="ECO:0007669"/>
    <property type="project" value="InterPro"/>
</dbReference>
<dbReference type="GO" id="GO:0003735">
    <property type="term" value="F:structural constituent of ribosome"/>
    <property type="evidence" value="ECO:0007669"/>
    <property type="project" value="InterPro"/>
</dbReference>
<dbReference type="GO" id="GO:0006412">
    <property type="term" value="P:translation"/>
    <property type="evidence" value="ECO:0007669"/>
    <property type="project" value="UniProtKB-UniRule"/>
</dbReference>
<dbReference type="HAMAP" id="MF_00340">
    <property type="entry name" value="Ribosomal_bL32"/>
    <property type="match status" value="1"/>
</dbReference>
<dbReference type="InterPro" id="IPR002677">
    <property type="entry name" value="Ribosomal_bL32"/>
</dbReference>
<dbReference type="InterPro" id="IPR044957">
    <property type="entry name" value="Ribosomal_bL32_bact"/>
</dbReference>
<dbReference type="InterPro" id="IPR011332">
    <property type="entry name" value="Ribosomal_zn-bd"/>
</dbReference>
<dbReference type="NCBIfam" id="TIGR01031">
    <property type="entry name" value="rpmF_bact"/>
    <property type="match status" value="1"/>
</dbReference>
<dbReference type="PANTHER" id="PTHR35534">
    <property type="entry name" value="50S RIBOSOMAL PROTEIN L32"/>
    <property type="match status" value="1"/>
</dbReference>
<dbReference type="PANTHER" id="PTHR35534:SF1">
    <property type="entry name" value="LARGE RIBOSOMAL SUBUNIT PROTEIN BL32"/>
    <property type="match status" value="1"/>
</dbReference>
<dbReference type="Pfam" id="PF01783">
    <property type="entry name" value="Ribosomal_L32p"/>
    <property type="match status" value="1"/>
</dbReference>
<dbReference type="SUPFAM" id="SSF57829">
    <property type="entry name" value="Zn-binding ribosomal proteins"/>
    <property type="match status" value="1"/>
</dbReference>
<keyword id="KW-0687">Ribonucleoprotein</keyword>
<keyword id="KW-0689">Ribosomal protein</keyword>
<sequence>MAVPKFKPSKSRSRTRRSINMRKKIPQFQECSNCGNLVVRHRICLKCGYYRNNQYLEISL</sequence>
<organism>
    <name type="scientific">Borreliella afzelii (strain PKo)</name>
    <name type="common">Borrelia afzelii</name>
    <dbReference type="NCBI Taxonomy" id="390236"/>
    <lineage>
        <taxon>Bacteria</taxon>
        <taxon>Pseudomonadati</taxon>
        <taxon>Spirochaetota</taxon>
        <taxon>Spirochaetia</taxon>
        <taxon>Spirochaetales</taxon>
        <taxon>Borreliaceae</taxon>
        <taxon>Borreliella</taxon>
    </lineage>
</organism>